<organism>
    <name type="scientific">Cyanidioschyzon merolae (strain NIES-3377 / 10D)</name>
    <name type="common">Unicellular red alga</name>
    <dbReference type="NCBI Taxonomy" id="280699"/>
    <lineage>
        <taxon>Eukaryota</taxon>
        <taxon>Rhodophyta</taxon>
        <taxon>Bangiophyceae</taxon>
        <taxon>Cyanidiales</taxon>
        <taxon>Cyanidiaceae</taxon>
        <taxon>Cyanidioschyzon</taxon>
    </lineage>
</organism>
<gene>
    <name evidence="1" type="primary">rps16</name>
</gene>
<comment type="subcellular location">
    <subcellularLocation>
        <location>Plastid</location>
        <location>Chloroplast</location>
    </subcellularLocation>
</comment>
<comment type="similarity">
    <text evidence="1">Belongs to the bacterial ribosomal protein bS16 family.</text>
</comment>
<protein>
    <recommendedName>
        <fullName evidence="1">Small ribosomal subunit protein bS16c</fullName>
    </recommendedName>
    <alternativeName>
        <fullName evidence="2">30S ribosomal protein S16, chloroplastic</fullName>
    </alternativeName>
</protein>
<dbReference type="EMBL" id="AB002583">
    <property type="protein sequence ID" value="BAC76167.1"/>
    <property type="molecule type" value="Genomic_DNA"/>
</dbReference>
<dbReference type="RefSeq" id="NP_849005.1">
    <property type="nucleotide sequence ID" value="NC_004799.1"/>
</dbReference>
<dbReference type="SMR" id="Q85G24"/>
<dbReference type="STRING" id="280699.Q85G24"/>
<dbReference type="EnsemblPlants" id="CMV084CT">
    <property type="protein sequence ID" value="CMV084CT"/>
    <property type="gene ID" value="CMV084C"/>
</dbReference>
<dbReference type="GeneID" id="845004"/>
<dbReference type="Gramene" id="CMV084CT">
    <property type="protein sequence ID" value="CMV084CT"/>
    <property type="gene ID" value="CMV084C"/>
</dbReference>
<dbReference type="KEGG" id="cme:CymeCp073"/>
<dbReference type="eggNOG" id="KOG3419">
    <property type="taxonomic scope" value="Eukaryota"/>
</dbReference>
<dbReference type="HOGENOM" id="CLU_100590_5_2_1"/>
<dbReference type="Proteomes" id="UP000007014">
    <property type="component" value="Chloroplast"/>
</dbReference>
<dbReference type="GO" id="GO:0009507">
    <property type="term" value="C:chloroplast"/>
    <property type="evidence" value="ECO:0007669"/>
    <property type="project" value="UniProtKB-SubCell"/>
</dbReference>
<dbReference type="GO" id="GO:0005739">
    <property type="term" value="C:mitochondrion"/>
    <property type="evidence" value="ECO:0007669"/>
    <property type="project" value="GOC"/>
</dbReference>
<dbReference type="GO" id="GO:0015935">
    <property type="term" value="C:small ribosomal subunit"/>
    <property type="evidence" value="ECO:0007669"/>
    <property type="project" value="TreeGrafter"/>
</dbReference>
<dbReference type="GO" id="GO:0003735">
    <property type="term" value="F:structural constituent of ribosome"/>
    <property type="evidence" value="ECO:0007669"/>
    <property type="project" value="InterPro"/>
</dbReference>
<dbReference type="GO" id="GO:0032543">
    <property type="term" value="P:mitochondrial translation"/>
    <property type="evidence" value="ECO:0007669"/>
    <property type="project" value="TreeGrafter"/>
</dbReference>
<dbReference type="Gene3D" id="3.30.1320.10">
    <property type="match status" value="1"/>
</dbReference>
<dbReference type="HAMAP" id="MF_00385">
    <property type="entry name" value="Ribosomal_bS16"/>
    <property type="match status" value="1"/>
</dbReference>
<dbReference type="InterPro" id="IPR000307">
    <property type="entry name" value="Ribosomal_bS16"/>
</dbReference>
<dbReference type="InterPro" id="IPR020592">
    <property type="entry name" value="Ribosomal_bS16_CS"/>
</dbReference>
<dbReference type="InterPro" id="IPR023803">
    <property type="entry name" value="Ribosomal_bS16_dom_sf"/>
</dbReference>
<dbReference type="NCBIfam" id="TIGR00002">
    <property type="entry name" value="S16"/>
    <property type="match status" value="1"/>
</dbReference>
<dbReference type="PANTHER" id="PTHR12919">
    <property type="entry name" value="30S RIBOSOMAL PROTEIN S16"/>
    <property type="match status" value="1"/>
</dbReference>
<dbReference type="PANTHER" id="PTHR12919:SF20">
    <property type="entry name" value="SMALL RIBOSOMAL SUBUNIT PROTEIN BS16M"/>
    <property type="match status" value="1"/>
</dbReference>
<dbReference type="Pfam" id="PF00886">
    <property type="entry name" value="Ribosomal_S16"/>
    <property type="match status" value="1"/>
</dbReference>
<dbReference type="SUPFAM" id="SSF54565">
    <property type="entry name" value="Ribosomal protein S16"/>
    <property type="match status" value="1"/>
</dbReference>
<dbReference type="PROSITE" id="PS00732">
    <property type="entry name" value="RIBOSOMAL_S16"/>
    <property type="match status" value="1"/>
</dbReference>
<geneLocation type="chloroplast"/>
<reference key="1">
    <citation type="journal article" date="2003" name="DNA Res.">
        <title>Complete sequence and analysis of the plastid genome of the unicellular red alga Cyanidioschyzon merolae.</title>
        <authorList>
            <person name="Ohta N."/>
            <person name="Matsuzaki M."/>
            <person name="Misumi O."/>
            <person name="Miyagishima S.-Y."/>
            <person name="Nozaki H."/>
            <person name="Tanaka K."/>
            <person name="Shin-i T."/>
            <person name="Kohara Y."/>
            <person name="Kuroiwa T."/>
        </authorList>
    </citation>
    <scope>NUCLEOTIDE SEQUENCE [LARGE SCALE GENOMIC DNA]</scope>
    <source>
        <strain>NIES-3377 / 10D</strain>
    </source>
</reference>
<name>RR16_CYAM1</name>
<feature type="chain" id="PRO_0000167298" description="Small ribosomal subunit protein bS16c">
    <location>
        <begin position="1"/>
        <end position="75"/>
    </location>
</feature>
<evidence type="ECO:0000255" key="1">
    <source>
        <dbReference type="HAMAP-Rule" id="MF_00385"/>
    </source>
</evidence>
<evidence type="ECO:0000305" key="2"/>
<keyword id="KW-0150">Chloroplast</keyword>
<keyword id="KW-0934">Plastid</keyword>
<keyword id="KW-1185">Reference proteome</keyword>
<keyword id="KW-0687">Ribonucleoprotein</keyword>
<keyword id="KW-0689">Ribosomal protein</keyword>
<accession>Q85G24</accession>
<sequence>MLKIRLKRIGRRGMPSYRVVVMRSQTRRDGKAIEDLGFYNPISKQCVINKERIKVRLSQGAQMTETVKYLYEVKA</sequence>
<proteinExistence type="inferred from homology"/>